<proteinExistence type="inferred from homology"/>
<dbReference type="EC" id="2.1.1.190" evidence="1"/>
<dbReference type="EMBL" id="AE003849">
    <property type="protein sequence ID" value="AAF85157.1"/>
    <property type="molecule type" value="Genomic_DNA"/>
</dbReference>
<dbReference type="PIR" id="E82569">
    <property type="entry name" value="E82569"/>
</dbReference>
<dbReference type="RefSeq" id="WP_010894804.1">
    <property type="nucleotide sequence ID" value="NC_002488.3"/>
</dbReference>
<dbReference type="SMR" id="Q9PAY7"/>
<dbReference type="STRING" id="160492.XF_2358"/>
<dbReference type="DNASU" id="1127912"/>
<dbReference type="KEGG" id="xfa:XF_2358"/>
<dbReference type="eggNOG" id="COG2265">
    <property type="taxonomic scope" value="Bacteria"/>
</dbReference>
<dbReference type="HOGENOM" id="CLU_014689_8_2_6"/>
<dbReference type="Proteomes" id="UP000000812">
    <property type="component" value="Chromosome"/>
</dbReference>
<dbReference type="GO" id="GO:0051539">
    <property type="term" value="F:4 iron, 4 sulfur cluster binding"/>
    <property type="evidence" value="ECO:0007669"/>
    <property type="project" value="UniProtKB-KW"/>
</dbReference>
<dbReference type="GO" id="GO:0005506">
    <property type="term" value="F:iron ion binding"/>
    <property type="evidence" value="ECO:0007669"/>
    <property type="project" value="UniProtKB-UniRule"/>
</dbReference>
<dbReference type="GO" id="GO:0003723">
    <property type="term" value="F:RNA binding"/>
    <property type="evidence" value="ECO:0007669"/>
    <property type="project" value="InterPro"/>
</dbReference>
<dbReference type="GO" id="GO:0070041">
    <property type="term" value="F:rRNA (uridine-C5-)-methyltransferase activity"/>
    <property type="evidence" value="ECO:0007669"/>
    <property type="project" value="UniProtKB-UniRule"/>
</dbReference>
<dbReference type="GO" id="GO:0070475">
    <property type="term" value="P:rRNA base methylation"/>
    <property type="evidence" value="ECO:0007669"/>
    <property type="project" value="TreeGrafter"/>
</dbReference>
<dbReference type="CDD" id="cd02440">
    <property type="entry name" value="AdoMet_MTases"/>
    <property type="match status" value="1"/>
</dbReference>
<dbReference type="FunFam" id="2.40.50.140:FF:000097">
    <property type="entry name" value="23S rRNA (uracil(1939)-C(5))-methyltransferase RlmD"/>
    <property type="match status" value="1"/>
</dbReference>
<dbReference type="Gene3D" id="2.40.50.1070">
    <property type="match status" value="1"/>
</dbReference>
<dbReference type="Gene3D" id="2.40.50.140">
    <property type="entry name" value="Nucleic acid-binding proteins"/>
    <property type="match status" value="1"/>
</dbReference>
<dbReference type="Gene3D" id="3.40.50.150">
    <property type="entry name" value="Vaccinia Virus protein VP39"/>
    <property type="match status" value="1"/>
</dbReference>
<dbReference type="HAMAP" id="MF_01010">
    <property type="entry name" value="23SrRNA_methyltr_RlmD"/>
    <property type="match status" value="1"/>
</dbReference>
<dbReference type="InterPro" id="IPR001566">
    <property type="entry name" value="23S_rRNA_MeTrfase_RlmD"/>
</dbReference>
<dbReference type="InterPro" id="IPR030390">
    <property type="entry name" value="MeTrfase_TrmA_AS"/>
</dbReference>
<dbReference type="InterPro" id="IPR030391">
    <property type="entry name" value="MeTrfase_TrmA_CS"/>
</dbReference>
<dbReference type="InterPro" id="IPR012340">
    <property type="entry name" value="NA-bd_OB-fold"/>
</dbReference>
<dbReference type="InterPro" id="IPR029063">
    <property type="entry name" value="SAM-dependent_MTases_sf"/>
</dbReference>
<dbReference type="InterPro" id="IPR002792">
    <property type="entry name" value="TRAM_dom"/>
</dbReference>
<dbReference type="InterPro" id="IPR010280">
    <property type="entry name" value="U5_MeTrfase_fam"/>
</dbReference>
<dbReference type="NCBIfam" id="NF009639">
    <property type="entry name" value="PRK13168.1"/>
    <property type="match status" value="1"/>
</dbReference>
<dbReference type="NCBIfam" id="TIGR00479">
    <property type="entry name" value="rumA"/>
    <property type="match status" value="1"/>
</dbReference>
<dbReference type="PANTHER" id="PTHR11061:SF49">
    <property type="entry name" value="23S RRNA (URACIL(1939)-C(5))-METHYLTRANSFERASE RLMD"/>
    <property type="match status" value="1"/>
</dbReference>
<dbReference type="PANTHER" id="PTHR11061">
    <property type="entry name" value="RNA M5U METHYLTRANSFERASE"/>
    <property type="match status" value="1"/>
</dbReference>
<dbReference type="Pfam" id="PF05958">
    <property type="entry name" value="tRNA_U5-meth_tr"/>
    <property type="match status" value="1"/>
</dbReference>
<dbReference type="SUPFAM" id="SSF50249">
    <property type="entry name" value="Nucleic acid-binding proteins"/>
    <property type="match status" value="1"/>
</dbReference>
<dbReference type="SUPFAM" id="SSF53335">
    <property type="entry name" value="S-adenosyl-L-methionine-dependent methyltransferases"/>
    <property type="match status" value="1"/>
</dbReference>
<dbReference type="PROSITE" id="PS51687">
    <property type="entry name" value="SAM_MT_RNA_M5U"/>
    <property type="match status" value="1"/>
</dbReference>
<dbReference type="PROSITE" id="PS50926">
    <property type="entry name" value="TRAM"/>
    <property type="match status" value="1"/>
</dbReference>
<dbReference type="PROSITE" id="PS01230">
    <property type="entry name" value="TRMA_1"/>
    <property type="match status" value="1"/>
</dbReference>
<dbReference type="PROSITE" id="PS01231">
    <property type="entry name" value="TRMA_2"/>
    <property type="match status" value="1"/>
</dbReference>
<accession>Q9PAY7</accession>
<keyword id="KW-0004">4Fe-4S</keyword>
<keyword id="KW-0408">Iron</keyword>
<keyword id="KW-0411">Iron-sulfur</keyword>
<keyword id="KW-0479">Metal-binding</keyword>
<keyword id="KW-0489">Methyltransferase</keyword>
<keyword id="KW-0698">rRNA processing</keyword>
<keyword id="KW-0949">S-adenosyl-L-methionine</keyword>
<keyword id="KW-0808">Transferase</keyword>
<sequence>MARQNRFDRTSFQTQIIDLSHDGRGVARPHGEGDKVTFVTGALPGEVVIVEPVARNRHFDEARVVEVLQASPQRVIPRCSHFGVCSGCVLQHLAEDAQVVSKQRVLLESLERIGRVSPERVLPALAAESWGYRRKGRFSVRWVEKKGRTLVGFREHDPRFVADVSVCHTVVPQVGEKIALLATLLNSLDGRRDVPQIEFIAGDAVVALTVRHLQPLSEADRLALIEFGKEHGIAIFLQSGGVESVRLLWPDEVLLAFRLKPWDVEFVFRPLDFIQINGGLNEKMIAHALDLLGAGFGERVLDLFCGLGNFTLPLARTVDEVVGVEGDIGLVERARENARRNGLGNAEFFVADLTRDQRDAPWMRQGFDKLLLDPPRSGAIEVLKQLPLKMFERIVYVSCHPGSLARDADFLVNEQGFVLRAVGAMDMFPHTAHVESIAVFDRC</sequence>
<organism>
    <name type="scientific">Xylella fastidiosa (strain 9a5c)</name>
    <dbReference type="NCBI Taxonomy" id="160492"/>
    <lineage>
        <taxon>Bacteria</taxon>
        <taxon>Pseudomonadati</taxon>
        <taxon>Pseudomonadota</taxon>
        <taxon>Gammaproteobacteria</taxon>
        <taxon>Lysobacterales</taxon>
        <taxon>Lysobacteraceae</taxon>
        <taxon>Xylella</taxon>
    </lineage>
</organism>
<protein>
    <recommendedName>
        <fullName evidence="1">23S rRNA (uracil(1939)-C(5))-methyltransferase RlmD</fullName>
        <ecNumber evidence="1">2.1.1.190</ecNumber>
    </recommendedName>
    <alternativeName>
        <fullName evidence="1">23S rRNA(m5U1939)-methyltransferase</fullName>
    </alternativeName>
</protein>
<name>RLMD_XYLFA</name>
<gene>
    <name evidence="1" type="primary">rlmD</name>
    <name type="synonym">rumA</name>
    <name type="ordered locus">XF_2358</name>
</gene>
<feature type="chain" id="PRO_0000161923" description="23S rRNA (uracil(1939)-C(5))-methyltransferase RlmD">
    <location>
        <begin position="1"/>
        <end position="443"/>
    </location>
</feature>
<feature type="domain" description="TRAM" evidence="1">
    <location>
        <begin position="4"/>
        <end position="66"/>
    </location>
</feature>
<feature type="active site" description="Nucleophile" evidence="1">
    <location>
        <position position="399"/>
    </location>
</feature>
<feature type="binding site" evidence="1">
    <location>
        <position position="79"/>
    </location>
    <ligand>
        <name>[4Fe-4S] cluster</name>
        <dbReference type="ChEBI" id="CHEBI:49883"/>
    </ligand>
</feature>
<feature type="binding site" evidence="1">
    <location>
        <position position="85"/>
    </location>
    <ligand>
        <name>[4Fe-4S] cluster</name>
        <dbReference type="ChEBI" id="CHEBI:49883"/>
    </ligand>
</feature>
<feature type="binding site" evidence="1">
    <location>
        <position position="88"/>
    </location>
    <ligand>
        <name>[4Fe-4S] cluster</name>
        <dbReference type="ChEBI" id="CHEBI:49883"/>
    </ligand>
</feature>
<feature type="binding site" evidence="1">
    <location>
        <position position="167"/>
    </location>
    <ligand>
        <name>[4Fe-4S] cluster</name>
        <dbReference type="ChEBI" id="CHEBI:49883"/>
    </ligand>
</feature>
<feature type="binding site" evidence="1">
    <location>
        <position position="275"/>
    </location>
    <ligand>
        <name>S-adenosyl-L-methionine</name>
        <dbReference type="ChEBI" id="CHEBI:59789"/>
    </ligand>
</feature>
<feature type="binding site" evidence="1">
    <location>
        <position position="304"/>
    </location>
    <ligand>
        <name>S-adenosyl-L-methionine</name>
        <dbReference type="ChEBI" id="CHEBI:59789"/>
    </ligand>
</feature>
<feature type="binding site" evidence="1">
    <location>
        <position position="309"/>
    </location>
    <ligand>
        <name>S-adenosyl-L-methionine</name>
        <dbReference type="ChEBI" id="CHEBI:59789"/>
    </ligand>
</feature>
<feature type="binding site" evidence="1">
    <location>
        <position position="325"/>
    </location>
    <ligand>
        <name>S-adenosyl-L-methionine</name>
        <dbReference type="ChEBI" id="CHEBI:59789"/>
    </ligand>
</feature>
<feature type="binding site" evidence="1">
    <location>
        <position position="352"/>
    </location>
    <ligand>
        <name>S-adenosyl-L-methionine</name>
        <dbReference type="ChEBI" id="CHEBI:59789"/>
    </ligand>
</feature>
<feature type="binding site" evidence="1">
    <location>
        <position position="373"/>
    </location>
    <ligand>
        <name>S-adenosyl-L-methionine</name>
        <dbReference type="ChEBI" id="CHEBI:59789"/>
    </ligand>
</feature>
<reference key="1">
    <citation type="journal article" date="2000" name="Nature">
        <title>The genome sequence of the plant pathogen Xylella fastidiosa.</title>
        <authorList>
            <person name="Simpson A.J.G."/>
            <person name="Reinach F.C."/>
            <person name="Arruda P."/>
            <person name="Abreu F.A."/>
            <person name="Acencio M."/>
            <person name="Alvarenga R."/>
            <person name="Alves L.M.C."/>
            <person name="Araya J.E."/>
            <person name="Baia G.S."/>
            <person name="Baptista C.S."/>
            <person name="Barros M.H."/>
            <person name="Bonaccorsi E.D."/>
            <person name="Bordin S."/>
            <person name="Bove J.M."/>
            <person name="Briones M.R.S."/>
            <person name="Bueno M.R.P."/>
            <person name="Camargo A.A."/>
            <person name="Camargo L.E.A."/>
            <person name="Carraro D.M."/>
            <person name="Carrer H."/>
            <person name="Colauto N.B."/>
            <person name="Colombo C."/>
            <person name="Costa F.F."/>
            <person name="Costa M.C.R."/>
            <person name="Costa-Neto C.M."/>
            <person name="Coutinho L.L."/>
            <person name="Cristofani M."/>
            <person name="Dias-Neto E."/>
            <person name="Docena C."/>
            <person name="El-Dorry H."/>
            <person name="Facincani A.P."/>
            <person name="Ferreira A.J.S."/>
            <person name="Ferreira V.C.A."/>
            <person name="Ferro J.A."/>
            <person name="Fraga J.S."/>
            <person name="Franca S.C."/>
            <person name="Franco M.C."/>
            <person name="Frohme M."/>
            <person name="Furlan L.R."/>
            <person name="Garnier M."/>
            <person name="Goldman G.H."/>
            <person name="Goldman M.H.S."/>
            <person name="Gomes S.L."/>
            <person name="Gruber A."/>
            <person name="Ho P.L."/>
            <person name="Hoheisel J.D."/>
            <person name="Junqueira M.L."/>
            <person name="Kemper E.L."/>
            <person name="Kitajima J.P."/>
            <person name="Krieger J.E."/>
            <person name="Kuramae E.E."/>
            <person name="Laigret F."/>
            <person name="Lambais M.R."/>
            <person name="Leite L.C.C."/>
            <person name="Lemos E.G.M."/>
            <person name="Lemos M.V.F."/>
            <person name="Lopes S.A."/>
            <person name="Lopes C.R."/>
            <person name="Machado J.A."/>
            <person name="Machado M.A."/>
            <person name="Madeira A.M.B.N."/>
            <person name="Madeira H.M.F."/>
            <person name="Marino C.L."/>
            <person name="Marques M.V."/>
            <person name="Martins E.A.L."/>
            <person name="Martins E.M.F."/>
            <person name="Matsukuma A.Y."/>
            <person name="Menck C.F.M."/>
            <person name="Miracca E.C."/>
            <person name="Miyaki C.Y."/>
            <person name="Monteiro-Vitorello C.B."/>
            <person name="Moon D.H."/>
            <person name="Nagai M.A."/>
            <person name="Nascimento A.L.T.O."/>
            <person name="Netto L.E.S."/>
            <person name="Nhani A. Jr."/>
            <person name="Nobrega F.G."/>
            <person name="Nunes L.R."/>
            <person name="Oliveira M.A."/>
            <person name="de Oliveira M.C."/>
            <person name="de Oliveira R.C."/>
            <person name="Palmieri D.A."/>
            <person name="Paris A."/>
            <person name="Peixoto B.R."/>
            <person name="Pereira G.A.G."/>
            <person name="Pereira H.A. Jr."/>
            <person name="Pesquero J.B."/>
            <person name="Quaggio R.B."/>
            <person name="Roberto P.G."/>
            <person name="Rodrigues V."/>
            <person name="de Rosa A.J.M."/>
            <person name="de Rosa V.E. Jr."/>
            <person name="de Sa R.G."/>
            <person name="Santelli R.V."/>
            <person name="Sawasaki H.E."/>
            <person name="da Silva A.C.R."/>
            <person name="da Silva A.M."/>
            <person name="da Silva F.R."/>
            <person name="Silva W.A. Jr."/>
            <person name="da Silveira J.F."/>
            <person name="Silvestri M.L.Z."/>
            <person name="Siqueira W.J."/>
            <person name="de Souza A.A."/>
            <person name="de Souza A.P."/>
            <person name="Terenzi M.F."/>
            <person name="Truffi D."/>
            <person name="Tsai S.M."/>
            <person name="Tsuhako M.H."/>
            <person name="Vallada H."/>
            <person name="Van Sluys M.A."/>
            <person name="Verjovski-Almeida S."/>
            <person name="Vettore A.L."/>
            <person name="Zago M.A."/>
            <person name="Zatz M."/>
            <person name="Meidanis J."/>
            <person name="Setubal J.C."/>
        </authorList>
    </citation>
    <scope>NUCLEOTIDE SEQUENCE [LARGE SCALE GENOMIC DNA]</scope>
    <source>
        <strain>9a5c</strain>
    </source>
</reference>
<evidence type="ECO:0000255" key="1">
    <source>
        <dbReference type="HAMAP-Rule" id="MF_01010"/>
    </source>
</evidence>
<comment type="function">
    <text evidence="1">Catalyzes the formation of 5-methyl-uridine at position 1939 (m5U1939) in 23S rRNA.</text>
</comment>
<comment type="catalytic activity">
    <reaction evidence="1">
        <text>uridine(1939) in 23S rRNA + S-adenosyl-L-methionine = 5-methyluridine(1939) in 23S rRNA + S-adenosyl-L-homocysteine + H(+)</text>
        <dbReference type="Rhea" id="RHEA:42908"/>
        <dbReference type="Rhea" id="RHEA-COMP:10278"/>
        <dbReference type="Rhea" id="RHEA-COMP:10279"/>
        <dbReference type="ChEBI" id="CHEBI:15378"/>
        <dbReference type="ChEBI" id="CHEBI:57856"/>
        <dbReference type="ChEBI" id="CHEBI:59789"/>
        <dbReference type="ChEBI" id="CHEBI:65315"/>
        <dbReference type="ChEBI" id="CHEBI:74447"/>
        <dbReference type="EC" id="2.1.1.190"/>
    </reaction>
</comment>
<comment type="similarity">
    <text evidence="1">Belongs to the class I-like SAM-binding methyltransferase superfamily. RNA M5U methyltransferase family. RlmD subfamily.</text>
</comment>